<comment type="function">
    <text>Nematode cuticles are composed largely of collagen-like proteins. The cuticle functions both as an exoskeleton and as a barrier to protect the worm from its environment.</text>
</comment>
<comment type="subunit">
    <text>Collagen polypeptide chains are complexed within the cuticle by disulfide bonds and other types of covalent cross-links.</text>
</comment>
<comment type="similarity">
    <text evidence="3">Belongs to the cuticular collagen family.</text>
</comment>
<sequence>MGKLIVVGSCGVLVCVLASLYTIGNLLNEIEELQVEFQDGMVEFRAITQDTWARMVSKHINPTGHTNAPPTFETLFGARTARQAGFEQCNCGPKSEGCPAGPPGPPGEGGQKGNPGHDGDDGKPGAPGVIVAITHDIPGGCIKCPPGRPGPKGPSGLPGSAGPAGGNGRRGPPGPVGGPGEQGPQGDAGRPGAAGRPGPAGPRGEPGTEYKPGQPGRPGPQGPRGETGPAGNPGAPGNDGEAGKNGNAGRPGPPGHPGKNGVPGQKGEDAAPGPDAGYCPCPSRAAYKA</sequence>
<reference key="1">
    <citation type="journal article" date="1989" name="Gene">
        <title>Sequence comparisons of developmentally regulated collagen genes of Caenorhabditis elegans.</title>
        <authorList>
            <person name="Cox G.N."/>
            <person name="Fields C."/>
            <person name="Kramer J.M."/>
            <person name="Rosenzweig B."/>
            <person name="Hirsh D."/>
        </authorList>
    </citation>
    <scope>NUCLEOTIDE SEQUENCE [GENOMIC DNA]</scope>
    <source>
        <strain>Bristol N2</strain>
    </source>
</reference>
<reference key="2">
    <citation type="journal article" date="1998" name="Science">
        <title>Genome sequence of the nematode C. elegans: a platform for investigating biology.</title>
        <authorList>
            <consortium name="The C. elegans sequencing consortium"/>
        </authorList>
    </citation>
    <scope>NUCLEOTIDE SEQUENCE [LARGE SCALE GENOMIC DNA]</scope>
    <source>
        <strain>Bristol N2</strain>
    </source>
</reference>
<evidence type="ECO:0000255" key="1"/>
<evidence type="ECO:0000256" key="2">
    <source>
        <dbReference type="SAM" id="MobiDB-lite"/>
    </source>
</evidence>
<evidence type="ECO:0000305" key="3"/>
<organism>
    <name type="scientific">Caenorhabditis elegans</name>
    <dbReference type="NCBI Taxonomy" id="6239"/>
    <lineage>
        <taxon>Eukaryota</taxon>
        <taxon>Metazoa</taxon>
        <taxon>Ecdysozoa</taxon>
        <taxon>Nematoda</taxon>
        <taxon>Chromadorea</taxon>
        <taxon>Rhabditida</taxon>
        <taxon>Rhabditina</taxon>
        <taxon>Rhabditomorpha</taxon>
        <taxon>Rhabditoidea</taxon>
        <taxon>Rhabditidae</taxon>
        <taxon>Peloderinae</taxon>
        <taxon>Caenorhabditis</taxon>
    </lineage>
</organism>
<proteinExistence type="inferred from homology"/>
<accession>P18835</accession>
<accession>Q23411</accession>
<feature type="signal peptide" evidence="1">
    <location>
        <begin position="1"/>
        <end position="18"/>
    </location>
</feature>
<feature type="chain" id="PRO_0000006426" description="Cuticle collagen 19">
    <location>
        <begin position="19"/>
        <end position="289"/>
    </location>
</feature>
<feature type="region of interest" description="Disordered" evidence="2">
    <location>
        <begin position="95"/>
        <end position="289"/>
    </location>
</feature>
<feature type="region of interest" description="Triple-helical region">
    <location>
        <begin position="101"/>
        <end position="130"/>
    </location>
</feature>
<feature type="region of interest" description="Triple-helical region">
    <location>
        <begin position="147"/>
        <end position="269"/>
    </location>
</feature>
<feature type="compositionally biased region" description="Gly residues" evidence="2">
    <location>
        <begin position="162"/>
        <end position="183"/>
    </location>
</feature>
<feature type="compositionally biased region" description="Low complexity" evidence="2">
    <location>
        <begin position="184"/>
        <end position="207"/>
    </location>
</feature>
<feature type="compositionally biased region" description="Low complexity" evidence="2">
    <location>
        <begin position="223"/>
        <end position="239"/>
    </location>
</feature>
<feature type="sequence conflict" description="In Ref. 1; AAA27987." evidence="3" ref="1">
    <original>K</original>
    <variation>T</variation>
    <location>
        <position position="3"/>
    </location>
</feature>
<feature type="sequence conflict" description="In Ref. 1; AAA27987." evidence="3" ref="1">
    <original>NLLNEIEELQVEFQDGMVEFR</original>
    <variation>TFSMRSRSFKLSSRM</variation>
    <location>
        <begin position="25"/>
        <end position="45"/>
    </location>
</feature>
<feature type="sequence conflict" description="In Ref. 1; AAA27987." evidence="3" ref="1">
    <original>P</original>
    <variation>L</variation>
    <location>
        <position position="69"/>
    </location>
</feature>
<feature type="sequence conflict" description="In Ref. 1; AAA27987." evidence="3" ref="1">
    <original>E</original>
    <variation>D</variation>
    <location>
        <position position="96"/>
    </location>
</feature>
<feature type="sequence conflict" description="In Ref. 1; AAA27987." evidence="3" ref="1">
    <original>R</original>
    <variation>C</variation>
    <location>
        <position position="148"/>
    </location>
</feature>
<protein>
    <recommendedName>
        <fullName>Cuticle collagen 19</fullName>
    </recommendedName>
</protein>
<dbReference type="EMBL" id="M25481">
    <property type="protein sequence ID" value="AAA27987.1"/>
    <property type="molecule type" value="Genomic_DNA"/>
</dbReference>
<dbReference type="EMBL" id="FO081441">
    <property type="protein sequence ID" value="CCD71633.1"/>
    <property type="molecule type" value="Genomic_DNA"/>
</dbReference>
<dbReference type="PIR" id="JS0170">
    <property type="entry name" value="JS0170"/>
</dbReference>
<dbReference type="PIR" id="T27708">
    <property type="entry name" value="T27708"/>
</dbReference>
<dbReference type="RefSeq" id="NP_001033577.1">
    <property type="nucleotide sequence ID" value="NM_001038488.6"/>
</dbReference>
<dbReference type="SMR" id="P18835"/>
<dbReference type="BioGRID" id="45350">
    <property type="interactions" value="3"/>
</dbReference>
<dbReference type="DIP" id="DIP-26658N"/>
<dbReference type="FunCoup" id="P18835">
    <property type="interactions" value="82"/>
</dbReference>
<dbReference type="IntAct" id="P18835">
    <property type="interactions" value="1"/>
</dbReference>
<dbReference type="STRING" id="6239.ZK1193.1.1"/>
<dbReference type="PaxDb" id="6239-ZK1193.1"/>
<dbReference type="PeptideAtlas" id="P18835"/>
<dbReference type="EnsemblMetazoa" id="ZK1193.1.1">
    <property type="protein sequence ID" value="ZK1193.1.1"/>
    <property type="gene ID" value="WBGene00000608"/>
</dbReference>
<dbReference type="GeneID" id="180397"/>
<dbReference type="KEGG" id="cel:CELE_ZK1193.1"/>
<dbReference type="UCSC" id="ZK1193.1">
    <property type="organism name" value="c. elegans"/>
</dbReference>
<dbReference type="AGR" id="WB:WBGene00000608"/>
<dbReference type="CTD" id="180397"/>
<dbReference type="WormBase" id="ZK1193.1">
    <property type="protein sequence ID" value="CE05126"/>
    <property type="gene ID" value="WBGene00000608"/>
    <property type="gene designation" value="col-19"/>
</dbReference>
<dbReference type="eggNOG" id="KOG3544">
    <property type="taxonomic scope" value="Eukaryota"/>
</dbReference>
<dbReference type="GeneTree" id="ENSGT00970000196588"/>
<dbReference type="HOGENOM" id="CLU_001074_4_3_1"/>
<dbReference type="InParanoid" id="P18835"/>
<dbReference type="OMA" id="GFEQCNC"/>
<dbReference type="OrthoDB" id="5877755at2759"/>
<dbReference type="PhylomeDB" id="P18835"/>
<dbReference type="SignaLink" id="P18835"/>
<dbReference type="PRO" id="PR:P18835"/>
<dbReference type="Proteomes" id="UP000001940">
    <property type="component" value="Chromosome X"/>
</dbReference>
<dbReference type="Bgee" id="WBGene00000608">
    <property type="expression patterns" value="Expressed in adult organism and 2 other cell types or tissues"/>
</dbReference>
<dbReference type="GO" id="GO:0060111">
    <property type="term" value="C:alae of collagen and cuticulin-based cuticle extracellular matrix"/>
    <property type="evidence" value="ECO:0000314"/>
    <property type="project" value="WormBase"/>
</dbReference>
<dbReference type="GO" id="GO:0060107">
    <property type="term" value="C:annuli extracellular matrix"/>
    <property type="evidence" value="ECO:0000314"/>
    <property type="project" value="WormBase"/>
</dbReference>
<dbReference type="GO" id="GO:0005581">
    <property type="term" value="C:collagen trimer"/>
    <property type="evidence" value="ECO:0007669"/>
    <property type="project" value="UniProtKB-KW"/>
</dbReference>
<dbReference type="GO" id="GO:0060102">
    <property type="term" value="C:cuticular extracellular matrix"/>
    <property type="evidence" value="ECO:0000314"/>
    <property type="project" value="WormBase"/>
</dbReference>
<dbReference type="GO" id="GO:0005576">
    <property type="term" value="C:extracellular region"/>
    <property type="evidence" value="ECO:0000303"/>
    <property type="project" value="UniProtKB"/>
</dbReference>
<dbReference type="GO" id="GO:0042329">
    <property type="term" value="F:structural constituent of collagen and cuticulin-based cuticle"/>
    <property type="evidence" value="ECO:0000314"/>
    <property type="project" value="WormBase"/>
</dbReference>
<dbReference type="GO" id="GO:0042302">
    <property type="term" value="F:structural constituent of cuticle"/>
    <property type="evidence" value="ECO:0000303"/>
    <property type="project" value="UniProtKB"/>
</dbReference>
<dbReference type="GO" id="GO:0040002">
    <property type="term" value="P:collagen and cuticulin-based cuticle development"/>
    <property type="evidence" value="ECO:0000303"/>
    <property type="project" value="UniProtKB"/>
</dbReference>
<dbReference type="GO" id="GO:0042338">
    <property type="term" value="P:cuticle development involved in collagen and cuticulin-based cuticle molting cycle"/>
    <property type="evidence" value="ECO:0000315"/>
    <property type="project" value="WormBase"/>
</dbReference>
<dbReference type="InterPro" id="IPR002486">
    <property type="entry name" value="Col_cuticle_N"/>
</dbReference>
<dbReference type="InterPro" id="IPR008160">
    <property type="entry name" value="Collagen"/>
</dbReference>
<dbReference type="PANTHER" id="PTHR24637">
    <property type="entry name" value="COLLAGEN"/>
    <property type="match status" value="1"/>
</dbReference>
<dbReference type="PANTHER" id="PTHR24637:SF407">
    <property type="entry name" value="CUTICLE COLLAGEN 19"/>
    <property type="match status" value="1"/>
</dbReference>
<dbReference type="Pfam" id="PF01484">
    <property type="entry name" value="Col_cuticle_N"/>
    <property type="match status" value="1"/>
</dbReference>
<dbReference type="Pfam" id="PF01391">
    <property type="entry name" value="Collagen"/>
    <property type="match status" value="1"/>
</dbReference>
<dbReference type="SMART" id="SM01088">
    <property type="entry name" value="Col_cuticle_N"/>
    <property type="match status" value="1"/>
</dbReference>
<gene>
    <name type="primary">col-19</name>
    <name type="ORF">ZK1193.1</name>
</gene>
<name>COL19_CAEEL</name>
<keyword id="KW-0176">Collagen</keyword>
<keyword id="KW-0193">Cuticle</keyword>
<keyword id="KW-1015">Disulfide bond</keyword>
<keyword id="KW-1185">Reference proteome</keyword>
<keyword id="KW-0677">Repeat</keyword>
<keyword id="KW-0732">Signal</keyword>